<evidence type="ECO:0000250" key="1">
    <source>
        <dbReference type="UniProtKB" id="Q04969"/>
    </source>
</evidence>
<evidence type="ECO:0000250" key="2">
    <source>
        <dbReference type="UniProtKB" id="Q15005"/>
    </source>
</evidence>
<evidence type="ECO:0000250" key="3">
    <source>
        <dbReference type="UniProtKB" id="Q28250"/>
    </source>
</evidence>
<evidence type="ECO:0000255" key="4"/>
<evidence type="ECO:0000305" key="5"/>
<evidence type="ECO:0000312" key="6">
    <source>
        <dbReference type="WormBase" id="Y37D8A.10"/>
    </source>
</evidence>
<feature type="chain" id="PRO_0000221165" description="Signal peptidase complex subunit 2">
    <location>
        <begin position="1"/>
        <end position="180"/>
    </location>
</feature>
<feature type="topological domain" description="Cytoplasmic" evidence="3">
    <location>
        <begin position="1"/>
        <end position="45"/>
    </location>
</feature>
<feature type="transmembrane region" description="Helical" evidence="4">
    <location>
        <begin position="46"/>
        <end position="66"/>
    </location>
</feature>
<feature type="topological domain" description="Lumenal" evidence="3">
    <location>
        <begin position="67"/>
        <end position="72"/>
    </location>
</feature>
<feature type="transmembrane region" description="Helical" evidence="4">
    <location>
        <begin position="73"/>
        <end position="93"/>
    </location>
</feature>
<feature type="topological domain" description="Cytoplasmic" evidence="3">
    <location>
        <begin position="94"/>
        <end position="180"/>
    </location>
</feature>
<organism>
    <name type="scientific">Caenorhabditis elegans</name>
    <dbReference type="NCBI Taxonomy" id="6239"/>
    <lineage>
        <taxon>Eukaryota</taxon>
        <taxon>Metazoa</taxon>
        <taxon>Ecdysozoa</taxon>
        <taxon>Nematoda</taxon>
        <taxon>Chromadorea</taxon>
        <taxon>Rhabditida</taxon>
        <taxon>Rhabditina</taxon>
        <taxon>Rhabditomorpha</taxon>
        <taxon>Rhabditoidea</taxon>
        <taxon>Rhabditidae</taxon>
        <taxon>Peloderinae</taxon>
        <taxon>Caenorhabditis</taxon>
    </lineage>
</organism>
<accession>Q9XWW1</accession>
<comment type="function">
    <text evidence="1 2">Component of the signal peptidase complex (SPC) which catalyzes the cleavage of N-terminal signal sequences from nascent proteins as they are translocated into the lumen of the endoplasmic reticulum (By similarity). Enhances the enzymatic activity of SPC and facilitates the interactions between different components of the translocation site (By similarity).</text>
</comment>
<comment type="subunit">
    <text evidence="2">Component of the signal peptidase complex (SPC) composed of a catalytic subunit sec-11 and three accessory subunits spcs-1, spcs-2 and spcs-3. The complex induces a local thinning of the ER membrane which is used to measure the length of the signal peptide (SP) h-region of protein substrates. This ensures the selectivity of the complex towards h-regions shorter than 18-20 amino acids.</text>
</comment>
<comment type="subcellular location">
    <subcellularLocation>
        <location evidence="3">Endoplasmic reticulum membrane</location>
        <topology evidence="3">Multi-pass membrane protein</topology>
    </subcellularLocation>
</comment>
<comment type="similarity">
    <text evidence="5">Belongs to the SPCS2 family.</text>
</comment>
<gene>
    <name evidence="6" type="primary">spcs-2</name>
    <name evidence="6" type="synonym">hpo-21</name>
    <name evidence="6" type="ORF">Y37D8A.10</name>
</gene>
<protein>
    <recommendedName>
        <fullName>Signal peptidase complex subunit 2</fullName>
    </recommendedName>
    <alternativeName>
        <fullName>Microsomal signal peptidase 25 kDa subunit</fullName>
        <shortName>SPase 25 kDa subunit</shortName>
    </alternativeName>
</protein>
<keyword id="KW-0256">Endoplasmic reticulum</keyword>
<keyword id="KW-0472">Membrane</keyword>
<keyword id="KW-1185">Reference proteome</keyword>
<keyword id="KW-0812">Transmembrane</keyword>
<keyword id="KW-1133">Transmembrane helix</keyword>
<dbReference type="EMBL" id="BX284603">
    <property type="protein sequence ID" value="CAA21529.1"/>
    <property type="molecule type" value="Genomic_DNA"/>
</dbReference>
<dbReference type="PIR" id="T26628">
    <property type="entry name" value="T26628"/>
</dbReference>
<dbReference type="RefSeq" id="NP_499676.1">
    <property type="nucleotide sequence ID" value="NM_067275.8"/>
</dbReference>
<dbReference type="SMR" id="Q9XWW1"/>
<dbReference type="BioGRID" id="41876">
    <property type="interactions" value="4"/>
</dbReference>
<dbReference type="DIP" id="DIP-25610N"/>
<dbReference type="FunCoup" id="Q9XWW1">
    <property type="interactions" value="2896"/>
</dbReference>
<dbReference type="IntAct" id="Q9XWW1">
    <property type="interactions" value="1"/>
</dbReference>
<dbReference type="STRING" id="6239.Y37D8A.10.2"/>
<dbReference type="PaxDb" id="6239-Y37D8A.10"/>
<dbReference type="PeptideAtlas" id="Q9XWW1"/>
<dbReference type="EnsemblMetazoa" id="Y37D8A.10.1">
    <property type="protein sequence ID" value="Y37D8A.10.1"/>
    <property type="gene ID" value="WBGene00012550"/>
</dbReference>
<dbReference type="GeneID" id="176703"/>
<dbReference type="KEGG" id="cel:CELE_Y37D8A.10"/>
<dbReference type="UCSC" id="Y37D8A.10">
    <property type="organism name" value="c. elegans"/>
</dbReference>
<dbReference type="AGR" id="WB:WBGene00012550"/>
<dbReference type="CTD" id="176703"/>
<dbReference type="WormBase" id="Y37D8A.10">
    <property type="protein sequence ID" value="CE20214"/>
    <property type="gene ID" value="WBGene00012550"/>
    <property type="gene designation" value="spcs-2"/>
</dbReference>
<dbReference type="eggNOG" id="KOG4072">
    <property type="taxonomic scope" value="Eukaryota"/>
</dbReference>
<dbReference type="GeneTree" id="ENSGT00440000038181"/>
<dbReference type="HOGENOM" id="CLU_094622_0_0_1"/>
<dbReference type="InParanoid" id="Q9XWW1"/>
<dbReference type="OMA" id="INKWDGT"/>
<dbReference type="OrthoDB" id="29558at2759"/>
<dbReference type="PhylomeDB" id="Q9XWW1"/>
<dbReference type="PRO" id="PR:Q9XWW1"/>
<dbReference type="Proteomes" id="UP000001940">
    <property type="component" value="Chromosome III"/>
</dbReference>
<dbReference type="Bgee" id="WBGene00012550">
    <property type="expression patterns" value="Expressed in germ line (C elegans) and 4 other cell types or tissues"/>
</dbReference>
<dbReference type="GO" id="GO:0016529">
    <property type="term" value="C:sarcoplasmic reticulum"/>
    <property type="evidence" value="ECO:0007005"/>
    <property type="project" value="WormBase"/>
</dbReference>
<dbReference type="GO" id="GO:0005787">
    <property type="term" value="C:signal peptidase complex"/>
    <property type="evidence" value="ECO:0000318"/>
    <property type="project" value="GO_Central"/>
</dbReference>
<dbReference type="GO" id="GO:0036498">
    <property type="term" value="P:IRE1-mediated unfolded protein response"/>
    <property type="evidence" value="ECO:0007007"/>
    <property type="project" value="WormBase"/>
</dbReference>
<dbReference type="GO" id="GO:0045047">
    <property type="term" value="P:protein targeting to ER"/>
    <property type="evidence" value="ECO:0000318"/>
    <property type="project" value="GO_Central"/>
</dbReference>
<dbReference type="GO" id="GO:0006465">
    <property type="term" value="P:signal peptide processing"/>
    <property type="evidence" value="ECO:0000318"/>
    <property type="project" value="GO_Central"/>
</dbReference>
<dbReference type="InterPro" id="IPR009582">
    <property type="entry name" value="Spc2/SPCS2"/>
</dbReference>
<dbReference type="PANTHER" id="PTHR13085">
    <property type="entry name" value="MICROSOMAL SIGNAL PEPTIDASE 25 KDA SUBUNIT"/>
    <property type="match status" value="1"/>
</dbReference>
<dbReference type="PANTHER" id="PTHR13085:SF0">
    <property type="entry name" value="SIGNAL PEPTIDASE COMPLEX SUBUNIT 2"/>
    <property type="match status" value="1"/>
</dbReference>
<dbReference type="Pfam" id="PF06703">
    <property type="entry name" value="SPC25"/>
    <property type="match status" value="1"/>
</dbReference>
<sequence>MTDEPVKVVNKWDGPTVKNALDEVVKKILNDKVGWTESHNLMNLRLLISFIGVAFSAFACGYDYYEPFPKSKIVLAVCSVSYFICMGILQMYQWYVEKDCIYEATEVDGKQSRKWAWSSEIKAHDDKYTLSAEFKKEGRSGQGKITKSIGAYIDNDGEIIVPLVKKEVDDLYNRLIRSEQ</sequence>
<proteinExistence type="inferred from homology"/>
<name>SPCS2_CAEEL</name>
<reference key="1">
    <citation type="journal article" date="1998" name="Science">
        <title>Genome sequence of the nematode C. elegans: a platform for investigating biology.</title>
        <authorList>
            <consortium name="The C. elegans sequencing consortium"/>
        </authorList>
    </citation>
    <scope>NUCLEOTIDE SEQUENCE [LARGE SCALE GENOMIC DNA]</scope>
    <source>
        <strain>Bristol N2</strain>
    </source>
</reference>